<comment type="subcellular location">
    <subcellularLocation>
        <location evidence="3">Host membrane</location>
        <topology evidence="3">Single-pass membrane protein</topology>
    </subcellularLocation>
</comment>
<evidence type="ECO:0000255" key="1"/>
<evidence type="ECO:0000256" key="2">
    <source>
        <dbReference type="SAM" id="MobiDB-lite"/>
    </source>
</evidence>
<evidence type="ECO:0000305" key="3"/>
<sequence>MEPLTLLIIIGGVILGNELIISLSRSYRLHNHKMAYRKHKHKTQENYETFASDKKRT</sequence>
<name>Y057_ABVP</name>
<gene>
    <name type="ORF">ORF57</name>
</gene>
<organism>
    <name type="scientific">Acidianus bottle-shaped virus (isolate Italy/Pozzuoli)</name>
    <name type="common">ABV</name>
    <dbReference type="NCBI Taxonomy" id="654911"/>
    <lineage>
        <taxon>Viruses</taxon>
        <taxon>Viruses incertae sedis</taxon>
        <taxon>Ampullaviridae</taxon>
        <taxon>Bottigliavirus</taxon>
        <taxon>Bottigliavirus ABV</taxon>
    </lineage>
</organism>
<feature type="chain" id="PRO_0000384827" description="Uncharacterized protein ORF57">
    <location>
        <begin position="1"/>
        <end position="57"/>
    </location>
</feature>
<feature type="transmembrane region" description="Helical" evidence="1">
    <location>
        <begin position="3"/>
        <end position="23"/>
    </location>
</feature>
<feature type="region of interest" description="Disordered" evidence="2">
    <location>
        <begin position="38"/>
        <end position="57"/>
    </location>
</feature>
<reference key="1">
    <citation type="journal article" date="2007" name="Virology">
        <title>Genome of the Acidianus bottle-shaped virus and insights into the replication and packaging mechanisms.</title>
        <authorList>
            <person name="Peng X."/>
            <person name="Basta T."/>
            <person name="Haring M."/>
            <person name="Garrett R.A."/>
            <person name="Prangishvili D."/>
        </authorList>
    </citation>
    <scope>NUCLEOTIDE SEQUENCE [GENOMIC DNA]</scope>
</reference>
<accession>A4ZUD5</accession>
<protein>
    <recommendedName>
        <fullName>Uncharacterized protein ORF57</fullName>
    </recommendedName>
</protein>
<organismHost>
    <name type="scientific">Acidianus convivator</name>
    <dbReference type="NCBI Taxonomy" id="269667"/>
</organismHost>
<proteinExistence type="predicted"/>
<dbReference type="EMBL" id="EF432053">
    <property type="protein sequence ID" value="ABP73439.1"/>
    <property type="molecule type" value="Genomic_DNA"/>
</dbReference>
<dbReference type="RefSeq" id="YP_001210353.1">
    <property type="nucleotide sequence ID" value="NC_009452.1"/>
</dbReference>
<dbReference type="GeneID" id="5129842"/>
<dbReference type="KEGG" id="vg:5129842"/>
<dbReference type="Proteomes" id="UP000000513">
    <property type="component" value="Segment"/>
</dbReference>
<dbReference type="GO" id="GO:0033644">
    <property type="term" value="C:host cell membrane"/>
    <property type="evidence" value="ECO:0007669"/>
    <property type="project" value="UniProtKB-SubCell"/>
</dbReference>
<dbReference type="GO" id="GO:0016020">
    <property type="term" value="C:membrane"/>
    <property type="evidence" value="ECO:0007669"/>
    <property type="project" value="UniProtKB-KW"/>
</dbReference>
<keyword id="KW-1043">Host membrane</keyword>
<keyword id="KW-0472">Membrane</keyword>
<keyword id="KW-1185">Reference proteome</keyword>
<keyword id="KW-0812">Transmembrane</keyword>
<keyword id="KW-1133">Transmembrane helix</keyword>